<evidence type="ECO:0000250" key="1">
    <source>
        <dbReference type="UniProtKB" id="A0A0D4WTV1"/>
    </source>
</evidence>
<evidence type="ECO:0000250" key="2">
    <source>
        <dbReference type="UniProtKB" id="A0A0D4WV12"/>
    </source>
</evidence>
<evidence type="ECO:0000250" key="3">
    <source>
        <dbReference type="UniProtKB" id="P0CE80"/>
    </source>
</evidence>
<evidence type="ECO:0000250" key="4">
    <source>
        <dbReference type="UniProtKB" id="Q4ZFU2"/>
    </source>
</evidence>
<evidence type="ECO:0000250" key="5">
    <source>
        <dbReference type="UniProtKB" id="Q8I914"/>
    </source>
</evidence>
<evidence type="ECO:0000303" key="6">
    <source>
    </source>
</evidence>
<evidence type="ECO:0000305" key="7"/>
<evidence type="ECO:0000305" key="8">
    <source>
    </source>
</evidence>
<dbReference type="EC" id="4.6.1.-" evidence="4"/>
<dbReference type="EMBL" id="FJ171440">
    <property type="protein sequence ID" value="ACN48936.1"/>
    <property type="molecule type" value="mRNA"/>
</dbReference>
<dbReference type="SMR" id="C0JB05"/>
<dbReference type="GO" id="GO:0005576">
    <property type="term" value="C:extracellular region"/>
    <property type="evidence" value="ECO:0007669"/>
    <property type="project" value="UniProtKB-SubCell"/>
</dbReference>
<dbReference type="GO" id="GO:0016829">
    <property type="term" value="F:lyase activity"/>
    <property type="evidence" value="ECO:0007669"/>
    <property type="project" value="UniProtKB-KW"/>
</dbReference>
<dbReference type="GO" id="GO:0046872">
    <property type="term" value="F:metal ion binding"/>
    <property type="evidence" value="ECO:0007669"/>
    <property type="project" value="UniProtKB-KW"/>
</dbReference>
<dbReference type="GO" id="GO:0008081">
    <property type="term" value="F:phosphoric diester hydrolase activity"/>
    <property type="evidence" value="ECO:0007669"/>
    <property type="project" value="InterPro"/>
</dbReference>
<dbReference type="GO" id="GO:0090729">
    <property type="term" value="F:toxin activity"/>
    <property type="evidence" value="ECO:0007669"/>
    <property type="project" value="UniProtKB-KW"/>
</dbReference>
<dbReference type="GO" id="GO:0031640">
    <property type="term" value="P:killing of cells of another organism"/>
    <property type="evidence" value="ECO:0007669"/>
    <property type="project" value="UniProtKB-KW"/>
</dbReference>
<dbReference type="GO" id="GO:0016042">
    <property type="term" value="P:lipid catabolic process"/>
    <property type="evidence" value="ECO:0007669"/>
    <property type="project" value="UniProtKB-KW"/>
</dbReference>
<dbReference type="CDD" id="cd08576">
    <property type="entry name" value="GDPD_like_SMaseD_PLD"/>
    <property type="match status" value="1"/>
</dbReference>
<dbReference type="Gene3D" id="3.20.20.190">
    <property type="entry name" value="Phosphatidylinositol (PI) phosphodiesterase"/>
    <property type="match status" value="1"/>
</dbReference>
<dbReference type="InterPro" id="IPR017946">
    <property type="entry name" value="PLC-like_Pdiesterase_TIM-brl"/>
</dbReference>
<dbReference type="SUPFAM" id="SSF51695">
    <property type="entry name" value="PLC-like phosphodiesterases"/>
    <property type="match status" value="1"/>
</dbReference>
<organism>
    <name type="scientific">Loxosceles spadicea</name>
    <name type="common">Recluse spider</name>
    <dbReference type="NCBI Taxonomy" id="571530"/>
    <lineage>
        <taxon>Eukaryota</taxon>
        <taxon>Metazoa</taxon>
        <taxon>Ecdysozoa</taxon>
        <taxon>Arthropoda</taxon>
        <taxon>Chelicerata</taxon>
        <taxon>Arachnida</taxon>
        <taxon>Araneae</taxon>
        <taxon>Araneomorphae</taxon>
        <taxon>Haplogynae</taxon>
        <taxon>Scytodoidea</taxon>
        <taxon>Sicariidae</taxon>
        <taxon>Loxosceles</taxon>
    </lineage>
</organism>
<name>A21_LOXSP</name>
<proteinExistence type="evidence at transcript level"/>
<keyword id="KW-0204">Cytolysis</keyword>
<keyword id="KW-1061">Dermonecrotic toxin</keyword>
<keyword id="KW-1015">Disulfide bond</keyword>
<keyword id="KW-0354">Hemolysis</keyword>
<keyword id="KW-0442">Lipid degradation</keyword>
<keyword id="KW-0443">Lipid metabolism</keyword>
<keyword id="KW-0456">Lyase</keyword>
<keyword id="KW-0460">Magnesium</keyword>
<keyword id="KW-0479">Metal-binding</keyword>
<keyword id="KW-0964">Secreted</keyword>
<keyword id="KW-0800">Toxin</keyword>
<reference key="1">
    <citation type="journal article" date="2009" name="Mol. Biol. Evol.">
        <title>Molecular evolution, functional variation, and proposed nomenclature of the gene family that includes sphingomyelinase D in sicariid spider venoms.</title>
        <authorList>
            <person name="Binford G.J."/>
            <person name="Bodner M.R."/>
            <person name="Cordes M.H."/>
            <person name="Baldwin K.L."/>
            <person name="Rynerson M.R."/>
            <person name="Burns S.N."/>
            <person name="Zobel-Thropp P.A."/>
        </authorList>
    </citation>
    <scope>NUCLEOTIDE SEQUENCE [MRNA]</scope>
    <scope>NOMENCLATURE</scope>
    <source>
        <tissue>Venom gland</tissue>
    </source>
</reference>
<accession>C0JB05</accession>
<comment type="function">
    <text evidence="1 3">Dermonecrotic toxins cleave the phosphodiester linkage between the phosphate and headgroup of certain phospholipids (sphingolipid and lysolipid substrates), forming an alcohol (often choline) and a cyclic phosphate (By similarity). This toxin acts on sphingomyelin (SM) (By similarity). It may also act on ceramide phosphoethanolamine (CPE), lysophosphatidylcholine (LPC) and lysophosphatidylethanolamine (LPE), but not on lysophosphatidylserine (LPS), and lysophosphatidylglycerol (LPG) (By similarity). It acts by transphosphatidylation, releasing exclusively cyclic phosphate products as second products (By similarity). Induces dermonecrosis, hemolysis, increased vascular permeability, edema, inflammatory response, and platelet aggregation (By similarity).</text>
</comment>
<comment type="catalytic activity">
    <reaction evidence="1">
        <text>an N-(acyl)-sphingosylphosphocholine = an N-(acyl)-sphingosyl-1,3-cyclic phosphate + choline</text>
        <dbReference type="Rhea" id="RHEA:60652"/>
        <dbReference type="ChEBI" id="CHEBI:15354"/>
        <dbReference type="ChEBI" id="CHEBI:64583"/>
        <dbReference type="ChEBI" id="CHEBI:143892"/>
    </reaction>
</comment>
<comment type="catalytic activity">
    <reaction evidence="1">
        <text>an N-(acyl)-sphingosylphosphoethanolamine = an N-(acyl)-sphingosyl-1,3-cyclic phosphate + ethanolamine</text>
        <dbReference type="Rhea" id="RHEA:60648"/>
        <dbReference type="ChEBI" id="CHEBI:57603"/>
        <dbReference type="ChEBI" id="CHEBI:143891"/>
        <dbReference type="ChEBI" id="CHEBI:143892"/>
    </reaction>
</comment>
<comment type="catalytic activity">
    <reaction evidence="1">
        <text>a 1-acyl-sn-glycero-3-phosphocholine = a 1-acyl-sn-glycero-2,3-cyclic phosphate + choline</text>
        <dbReference type="Rhea" id="RHEA:60700"/>
        <dbReference type="ChEBI" id="CHEBI:15354"/>
        <dbReference type="ChEBI" id="CHEBI:58168"/>
        <dbReference type="ChEBI" id="CHEBI:143947"/>
    </reaction>
</comment>
<comment type="catalytic activity">
    <reaction evidence="1">
        <text>a 1-acyl-sn-glycero-3-phosphoethanolamine = a 1-acyl-sn-glycero-2,3-cyclic phosphate + ethanolamine</text>
        <dbReference type="Rhea" id="RHEA:60704"/>
        <dbReference type="ChEBI" id="CHEBI:57603"/>
        <dbReference type="ChEBI" id="CHEBI:64381"/>
        <dbReference type="ChEBI" id="CHEBI:143947"/>
    </reaction>
</comment>
<comment type="cofactor">
    <cofactor evidence="5">
        <name>Mg(2+)</name>
        <dbReference type="ChEBI" id="CHEBI:18420"/>
    </cofactor>
    <text evidence="5">Binds 1 Mg(2+) ion per subunit.</text>
</comment>
<comment type="subcellular location">
    <subcellularLocation>
        <location evidence="8">Secreted</location>
    </subcellularLocation>
</comment>
<comment type="tissue specificity">
    <text evidence="8">Expressed by the venom gland.</text>
</comment>
<comment type="similarity">
    <text evidence="7">Belongs to the arthropod phospholipase D family. Class II subfamily.</text>
</comment>
<comment type="caution">
    <text evidence="1 2 4">The most common activity assay for dermonecrotic toxins detects enzymatic activity by monitoring choline release from substrate. Liberation of choline from sphingomyelin (SM) or lysophosphatidylcholine (LPC) is commonly assumed to result from substrate hydrolysis, giving either ceramide-1-phosphate (C1P) or lysophosphatidic acid (LPA), respectively, as a second product. However, two studies from Lajoie and colleagues (2013 and 2015) report the observation of exclusive formation of cyclic phosphate products as second products, resulting from intramolecular transphosphatidylation. Cyclic phosphates have vastly different biological properties from their monoester counterparts, and they may be relevant to the pathology of brown spider envenomation.</text>
</comment>
<sequence length="272" mass="31373">WIMGHMVNAIWQIDQFMDLGVNSIEFDINFDKSANPIYTYHGVPCDCFRSCLKWEYFGDFLTALRHRTTPGDKLYKEKLILFVFDMKTNSLYDNQAYTAGVNMANNIFKYYWNNGNNGGRSYFILSIPNLNHYNLIKGFQETIKSKGHPELLEKVGYDFSANDDIPDVEKAYQKVGVTGHVWQSDGITNCLPRTLTRVQAAVKERDSGGVINKVYYWTADKYSTTRDALDAGVDGIMTNYPYVLNDVLKENAYKNKFRLANYEDNPWVTFKP</sequence>
<protein>
    <recommendedName>
        <fullName evidence="6">Dermonecrotic toxin LspaSicTox-alphaII1</fullName>
        <ecNumber evidence="4">4.6.1.-</ecNumber>
    </recommendedName>
    <alternativeName>
        <fullName>Phospholipase D</fullName>
        <shortName>PLD</shortName>
    </alternativeName>
    <alternativeName>
        <fullName>Sphingomyelin phosphodiesterase D</fullName>
        <shortName>SMD</shortName>
        <shortName>SMase D</shortName>
        <shortName>Sphingomyelinase D</shortName>
    </alternativeName>
</protein>
<feature type="chain" id="PRO_0000392822" description="Dermonecrotic toxin LspaSicTox-alphaII1">
    <location>
        <begin position="1" status="less than"/>
        <end position="272"/>
    </location>
</feature>
<feature type="active site" evidence="5">
    <location>
        <position position="5"/>
    </location>
</feature>
<feature type="active site" description="Nucleophile" evidence="5">
    <location>
        <position position="41"/>
    </location>
</feature>
<feature type="binding site" evidence="5">
    <location>
        <position position="25"/>
    </location>
    <ligand>
        <name>Mg(2+)</name>
        <dbReference type="ChEBI" id="CHEBI:18420"/>
    </ligand>
</feature>
<feature type="binding site" evidence="5">
    <location>
        <position position="27"/>
    </location>
    <ligand>
        <name>Mg(2+)</name>
        <dbReference type="ChEBI" id="CHEBI:18420"/>
    </ligand>
</feature>
<feature type="binding site" evidence="5">
    <location>
        <position position="85"/>
    </location>
    <ligand>
        <name>Mg(2+)</name>
        <dbReference type="ChEBI" id="CHEBI:18420"/>
    </ligand>
</feature>
<feature type="disulfide bond" evidence="3">
    <location>
        <begin position="45"/>
        <end position="51"/>
    </location>
</feature>
<feature type="disulfide bond" evidence="3">
    <location>
        <begin position="47"/>
        <end position="190"/>
    </location>
</feature>
<feature type="non-terminal residue">
    <location>
        <position position="1"/>
    </location>
</feature>